<name>LIPA_YERPN</name>
<reference key="1">
    <citation type="journal article" date="2006" name="J. Bacteriol.">
        <title>Complete genome sequence of Yersinia pestis strains Antiqua and Nepal516: evidence of gene reduction in an emerging pathogen.</title>
        <authorList>
            <person name="Chain P.S.G."/>
            <person name="Hu P."/>
            <person name="Malfatti S.A."/>
            <person name="Radnedge L."/>
            <person name="Larimer F."/>
            <person name="Vergez L.M."/>
            <person name="Worsham P."/>
            <person name="Chu M.C."/>
            <person name="Andersen G.L."/>
        </authorList>
    </citation>
    <scope>NUCLEOTIDE SEQUENCE [LARGE SCALE GENOMIC DNA]</scope>
    <source>
        <strain>Nepal516</strain>
    </source>
</reference>
<reference key="2">
    <citation type="submission" date="2009-04" db="EMBL/GenBank/DDBJ databases">
        <title>Yersinia pestis Nepal516A whole genome shotgun sequencing project.</title>
        <authorList>
            <person name="Plunkett G. III"/>
            <person name="Anderson B.D."/>
            <person name="Baumler D.J."/>
            <person name="Burland V."/>
            <person name="Cabot E.L."/>
            <person name="Glasner J.D."/>
            <person name="Mau B."/>
            <person name="Neeno-Eckwall E."/>
            <person name="Perna N.T."/>
            <person name="Munk A.C."/>
            <person name="Tapia R."/>
            <person name="Green L.D."/>
            <person name="Rogers Y.C."/>
            <person name="Detter J.C."/>
            <person name="Bruce D.C."/>
            <person name="Brettin T.S."/>
        </authorList>
    </citation>
    <scope>NUCLEOTIDE SEQUENCE [LARGE SCALE GENOMIC DNA]</scope>
    <source>
        <strain>Nepal516</strain>
    </source>
</reference>
<feature type="chain" id="PRO_1000012303" description="Lipoyl synthase">
    <location>
        <begin position="1"/>
        <end position="321"/>
    </location>
</feature>
<feature type="domain" description="Radical SAM core" evidence="2">
    <location>
        <begin position="80"/>
        <end position="297"/>
    </location>
</feature>
<feature type="binding site" evidence="1">
    <location>
        <position position="68"/>
    </location>
    <ligand>
        <name>[4Fe-4S] cluster</name>
        <dbReference type="ChEBI" id="CHEBI:49883"/>
        <label>1</label>
    </ligand>
</feature>
<feature type="binding site" evidence="1">
    <location>
        <position position="73"/>
    </location>
    <ligand>
        <name>[4Fe-4S] cluster</name>
        <dbReference type="ChEBI" id="CHEBI:49883"/>
        <label>1</label>
    </ligand>
</feature>
<feature type="binding site" evidence="1">
    <location>
        <position position="79"/>
    </location>
    <ligand>
        <name>[4Fe-4S] cluster</name>
        <dbReference type="ChEBI" id="CHEBI:49883"/>
        <label>1</label>
    </ligand>
</feature>
<feature type="binding site" evidence="1">
    <location>
        <position position="94"/>
    </location>
    <ligand>
        <name>[4Fe-4S] cluster</name>
        <dbReference type="ChEBI" id="CHEBI:49883"/>
        <label>2</label>
        <note>4Fe-4S-S-AdoMet</note>
    </ligand>
</feature>
<feature type="binding site" evidence="1">
    <location>
        <position position="98"/>
    </location>
    <ligand>
        <name>[4Fe-4S] cluster</name>
        <dbReference type="ChEBI" id="CHEBI:49883"/>
        <label>2</label>
        <note>4Fe-4S-S-AdoMet</note>
    </ligand>
</feature>
<feature type="binding site" evidence="1">
    <location>
        <position position="101"/>
    </location>
    <ligand>
        <name>[4Fe-4S] cluster</name>
        <dbReference type="ChEBI" id="CHEBI:49883"/>
        <label>2</label>
        <note>4Fe-4S-S-AdoMet</note>
    </ligand>
</feature>
<feature type="binding site" evidence="1">
    <location>
        <position position="308"/>
    </location>
    <ligand>
        <name>[4Fe-4S] cluster</name>
        <dbReference type="ChEBI" id="CHEBI:49883"/>
        <label>1</label>
    </ligand>
</feature>
<evidence type="ECO:0000255" key="1">
    <source>
        <dbReference type="HAMAP-Rule" id="MF_00206"/>
    </source>
</evidence>
<evidence type="ECO:0000255" key="2">
    <source>
        <dbReference type="PROSITE-ProRule" id="PRU01266"/>
    </source>
</evidence>
<sequence length="321" mass="36086">MSKPIQMERGVKYRDADKMALIPVKNVVTERQELLRKPEWLKIKLPTDSSRIQGIKAAMRKNGLHSVCEEASCPNLSECFNHGTATFMILGAICTRRCPFCDVAHGRPVTPDANEPEKLAQTIQDMGLRYVVITSVDRDDLRDGGAQHFADCISAIRAKNPTIKIETLVPDFRGRMDRALDILTATPPDVFNHNLENVPRVYRQVRPGANYDWSLKLLERFKEAHPDIPTKSGLMVGLGETNAEIVEVMHDLRRHGVTMLTLGQYLQPSRHHLPVQRYVSPAEFDEMKAEAMAMGFTHAACGPFVRSSYHADLQAKGMEVK</sequence>
<dbReference type="EC" id="2.8.1.8" evidence="1"/>
<dbReference type="EMBL" id="CP000305">
    <property type="protein sequence ID" value="ABG17414.1"/>
    <property type="molecule type" value="Genomic_DNA"/>
</dbReference>
<dbReference type="EMBL" id="ACNQ01000008">
    <property type="protein sequence ID" value="EEO77507.1"/>
    <property type="molecule type" value="Genomic_DNA"/>
</dbReference>
<dbReference type="RefSeq" id="WP_002210320.1">
    <property type="nucleotide sequence ID" value="NZ_ACNQ01000008.1"/>
</dbReference>
<dbReference type="SMR" id="Q1CKR6"/>
<dbReference type="GeneID" id="96664611"/>
<dbReference type="KEGG" id="ypn:YPN_1083"/>
<dbReference type="HOGENOM" id="CLU_033144_2_1_6"/>
<dbReference type="UniPathway" id="UPA00538">
    <property type="reaction ID" value="UER00593"/>
</dbReference>
<dbReference type="Proteomes" id="UP000008936">
    <property type="component" value="Chromosome"/>
</dbReference>
<dbReference type="GO" id="GO:0005737">
    <property type="term" value="C:cytoplasm"/>
    <property type="evidence" value="ECO:0007669"/>
    <property type="project" value="UniProtKB-SubCell"/>
</dbReference>
<dbReference type="GO" id="GO:0051539">
    <property type="term" value="F:4 iron, 4 sulfur cluster binding"/>
    <property type="evidence" value="ECO:0007669"/>
    <property type="project" value="UniProtKB-UniRule"/>
</dbReference>
<dbReference type="GO" id="GO:0016992">
    <property type="term" value="F:lipoate synthase activity"/>
    <property type="evidence" value="ECO:0007669"/>
    <property type="project" value="UniProtKB-UniRule"/>
</dbReference>
<dbReference type="GO" id="GO:0046872">
    <property type="term" value="F:metal ion binding"/>
    <property type="evidence" value="ECO:0007669"/>
    <property type="project" value="UniProtKB-KW"/>
</dbReference>
<dbReference type="CDD" id="cd01335">
    <property type="entry name" value="Radical_SAM"/>
    <property type="match status" value="1"/>
</dbReference>
<dbReference type="FunFam" id="3.20.20.70:FF:000023">
    <property type="entry name" value="Lipoyl synthase"/>
    <property type="match status" value="1"/>
</dbReference>
<dbReference type="Gene3D" id="3.20.20.70">
    <property type="entry name" value="Aldolase class I"/>
    <property type="match status" value="1"/>
</dbReference>
<dbReference type="HAMAP" id="MF_00206">
    <property type="entry name" value="Lipoyl_synth"/>
    <property type="match status" value="1"/>
</dbReference>
<dbReference type="InterPro" id="IPR013785">
    <property type="entry name" value="Aldolase_TIM"/>
</dbReference>
<dbReference type="InterPro" id="IPR006638">
    <property type="entry name" value="Elp3/MiaA/NifB-like_rSAM"/>
</dbReference>
<dbReference type="InterPro" id="IPR031691">
    <property type="entry name" value="LIAS_N"/>
</dbReference>
<dbReference type="InterPro" id="IPR003698">
    <property type="entry name" value="Lipoyl_synth"/>
</dbReference>
<dbReference type="InterPro" id="IPR007197">
    <property type="entry name" value="rSAM"/>
</dbReference>
<dbReference type="NCBIfam" id="TIGR00510">
    <property type="entry name" value="lipA"/>
    <property type="match status" value="1"/>
</dbReference>
<dbReference type="NCBIfam" id="NF004019">
    <property type="entry name" value="PRK05481.1"/>
    <property type="match status" value="1"/>
</dbReference>
<dbReference type="NCBIfam" id="NF009544">
    <property type="entry name" value="PRK12928.1"/>
    <property type="match status" value="1"/>
</dbReference>
<dbReference type="PANTHER" id="PTHR10949">
    <property type="entry name" value="LIPOYL SYNTHASE"/>
    <property type="match status" value="1"/>
</dbReference>
<dbReference type="PANTHER" id="PTHR10949:SF0">
    <property type="entry name" value="LIPOYL SYNTHASE, MITOCHONDRIAL"/>
    <property type="match status" value="1"/>
</dbReference>
<dbReference type="Pfam" id="PF16881">
    <property type="entry name" value="LIAS_N"/>
    <property type="match status" value="1"/>
</dbReference>
<dbReference type="Pfam" id="PF04055">
    <property type="entry name" value="Radical_SAM"/>
    <property type="match status" value="1"/>
</dbReference>
<dbReference type="PIRSF" id="PIRSF005963">
    <property type="entry name" value="Lipoyl_synth"/>
    <property type="match status" value="1"/>
</dbReference>
<dbReference type="SFLD" id="SFLDF00271">
    <property type="entry name" value="lipoyl_synthase"/>
    <property type="match status" value="1"/>
</dbReference>
<dbReference type="SFLD" id="SFLDG01058">
    <property type="entry name" value="lipoyl_synthase_like"/>
    <property type="match status" value="1"/>
</dbReference>
<dbReference type="SMART" id="SM00729">
    <property type="entry name" value="Elp3"/>
    <property type="match status" value="1"/>
</dbReference>
<dbReference type="SUPFAM" id="SSF102114">
    <property type="entry name" value="Radical SAM enzymes"/>
    <property type="match status" value="1"/>
</dbReference>
<dbReference type="PROSITE" id="PS51918">
    <property type="entry name" value="RADICAL_SAM"/>
    <property type="match status" value="1"/>
</dbReference>
<protein>
    <recommendedName>
        <fullName evidence="1">Lipoyl synthase</fullName>
        <ecNumber evidence="1">2.8.1.8</ecNumber>
    </recommendedName>
    <alternativeName>
        <fullName evidence="1">Lip-syn</fullName>
        <shortName evidence="1">LS</shortName>
    </alternativeName>
    <alternativeName>
        <fullName evidence="1">Lipoate synthase</fullName>
    </alternativeName>
    <alternativeName>
        <fullName evidence="1">Lipoic acid synthase</fullName>
    </alternativeName>
    <alternativeName>
        <fullName evidence="1">Sulfur insertion protein LipA</fullName>
    </alternativeName>
</protein>
<comment type="function">
    <text evidence="1">Catalyzes the radical-mediated insertion of two sulfur atoms into the C-6 and C-8 positions of the octanoyl moiety bound to the lipoyl domains of lipoate-dependent enzymes, thereby converting the octanoylated domains into lipoylated derivatives.</text>
</comment>
<comment type="catalytic activity">
    <reaction evidence="1">
        <text>[[Fe-S] cluster scaffold protein carrying a second [4Fe-4S](2+) cluster] + N(6)-octanoyl-L-lysyl-[protein] + 2 oxidized [2Fe-2S]-[ferredoxin] + 2 S-adenosyl-L-methionine + 4 H(+) = [[Fe-S] cluster scaffold protein] + N(6)-[(R)-dihydrolipoyl]-L-lysyl-[protein] + 4 Fe(3+) + 2 hydrogen sulfide + 2 5'-deoxyadenosine + 2 L-methionine + 2 reduced [2Fe-2S]-[ferredoxin]</text>
        <dbReference type="Rhea" id="RHEA:16585"/>
        <dbReference type="Rhea" id="RHEA-COMP:9928"/>
        <dbReference type="Rhea" id="RHEA-COMP:10000"/>
        <dbReference type="Rhea" id="RHEA-COMP:10001"/>
        <dbReference type="Rhea" id="RHEA-COMP:10475"/>
        <dbReference type="Rhea" id="RHEA-COMP:14568"/>
        <dbReference type="Rhea" id="RHEA-COMP:14569"/>
        <dbReference type="ChEBI" id="CHEBI:15378"/>
        <dbReference type="ChEBI" id="CHEBI:17319"/>
        <dbReference type="ChEBI" id="CHEBI:29034"/>
        <dbReference type="ChEBI" id="CHEBI:29919"/>
        <dbReference type="ChEBI" id="CHEBI:33722"/>
        <dbReference type="ChEBI" id="CHEBI:33737"/>
        <dbReference type="ChEBI" id="CHEBI:33738"/>
        <dbReference type="ChEBI" id="CHEBI:57844"/>
        <dbReference type="ChEBI" id="CHEBI:59789"/>
        <dbReference type="ChEBI" id="CHEBI:78809"/>
        <dbReference type="ChEBI" id="CHEBI:83100"/>
        <dbReference type="EC" id="2.8.1.8"/>
    </reaction>
</comment>
<comment type="cofactor">
    <cofactor evidence="1">
        <name>[4Fe-4S] cluster</name>
        <dbReference type="ChEBI" id="CHEBI:49883"/>
    </cofactor>
    <text evidence="1">Binds 2 [4Fe-4S] clusters per subunit. One cluster is coordinated with 3 cysteines and an exchangeable S-adenosyl-L-methionine.</text>
</comment>
<comment type="pathway">
    <text evidence="1">Protein modification; protein lipoylation via endogenous pathway; protein N(6)-(lipoyl)lysine from octanoyl-[acyl-carrier-protein]: step 2/2.</text>
</comment>
<comment type="subcellular location">
    <subcellularLocation>
        <location evidence="1">Cytoplasm</location>
    </subcellularLocation>
</comment>
<comment type="similarity">
    <text evidence="1">Belongs to the radical SAM superfamily. Lipoyl synthase family.</text>
</comment>
<gene>
    <name evidence="1" type="primary">lipA</name>
    <name type="ordered locus">YPN_1083</name>
    <name type="ORF">YP516_1177</name>
</gene>
<accession>Q1CKR6</accession>
<accession>C4GR16</accession>
<proteinExistence type="inferred from homology"/>
<keyword id="KW-0004">4Fe-4S</keyword>
<keyword id="KW-0963">Cytoplasm</keyword>
<keyword id="KW-0408">Iron</keyword>
<keyword id="KW-0411">Iron-sulfur</keyword>
<keyword id="KW-0479">Metal-binding</keyword>
<keyword id="KW-0949">S-adenosyl-L-methionine</keyword>
<keyword id="KW-0808">Transferase</keyword>
<organism>
    <name type="scientific">Yersinia pestis bv. Antiqua (strain Nepal516)</name>
    <dbReference type="NCBI Taxonomy" id="377628"/>
    <lineage>
        <taxon>Bacteria</taxon>
        <taxon>Pseudomonadati</taxon>
        <taxon>Pseudomonadota</taxon>
        <taxon>Gammaproteobacteria</taxon>
        <taxon>Enterobacterales</taxon>
        <taxon>Yersiniaceae</taxon>
        <taxon>Yersinia</taxon>
    </lineage>
</organism>